<dbReference type="SMR" id="P0CE34"/>
<dbReference type="GO" id="GO:0005576">
    <property type="term" value="C:extracellular region"/>
    <property type="evidence" value="ECO:0007669"/>
    <property type="project" value="UniProtKB-SubCell"/>
</dbReference>
<dbReference type="GO" id="GO:0035792">
    <property type="term" value="C:host cell postsynaptic membrane"/>
    <property type="evidence" value="ECO:0007669"/>
    <property type="project" value="UniProtKB-KW"/>
</dbReference>
<dbReference type="GO" id="GO:0030550">
    <property type="term" value="F:acetylcholine receptor inhibitor activity"/>
    <property type="evidence" value="ECO:0007669"/>
    <property type="project" value="UniProtKB-KW"/>
</dbReference>
<dbReference type="GO" id="GO:0099106">
    <property type="term" value="F:ion channel regulator activity"/>
    <property type="evidence" value="ECO:0007669"/>
    <property type="project" value="UniProtKB-KW"/>
</dbReference>
<dbReference type="GO" id="GO:0090729">
    <property type="term" value="F:toxin activity"/>
    <property type="evidence" value="ECO:0007669"/>
    <property type="project" value="UniProtKB-KW"/>
</dbReference>
<name>CXAT1_CONRT</name>
<proteinExistence type="evidence at transcript level"/>
<keyword id="KW-0008">Acetylcholine receptor inhibiting toxin</keyword>
<keyword id="KW-1015">Disulfide bond</keyword>
<keyword id="KW-0301">Gamma-carboxyglutamic acid</keyword>
<keyword id="KW-0379">Hydroxylation</keyword>
<keyword id="KW-0872">Ion channel impairing toxin</keyword>
<keyword id="KW-0528">Neurotoxin</keyword>
<keyword id="KW-0629">Postsynaptic neurotoxin</keyword>
<keyword id="KW-0964">Secreted</keyword>
<keyword id="KW-0732">Signal</keyword>
<keyword id="KW-0800">Toxin</keyword>
<reference key="1">
    <citation type="journal article" date="2009" name="Biochemistry">
        <title>Novel alpha D-conopeptides and their precursors identified by cDNA cloning define the D-conotoxin superfamily.</title>
        <authorList>
            <person name="Loughnan M.L."/>
            <person name="Nicke A."/>
            <person name="Lawrence N."/>
            <person name="Lewis R.J."/>
        </authorList>
    </citation>
    <scope>NUCLEOTIDE SEQUENCE [MRNA]</scope>
    <source>
        <tissue>Venom duct</tissue>
    </source>
</reference>
<organism>
    <name type="scientific">Conus rattus</name>
    <name type="common">Rat cone</name>
    <dbReference type="NCBI Taxonomy" id="72283"/>
    <lineage>
        <taxon>Eukaryota</taxon>
        <taxon>Metazoa</taxon>
        <taxon>Spiralia</taxon>
        <taxon>Lophotrochozoa</taxon>
        <taxon>Mollusca</taxon>
        <taxon>Gastropoda</taxon>
        <taxon>Caenogastropoda</taxon>
        <taxon>Neogastropoda</taxon>
        <taxon>Conoidea</taxon>
        <taxon>Conidae</taxon>
        <taxon>Conus</taxon>
        <taxon>Rhizoconus</taxon>
    </lineage>
</organism>
<sequence length="92" mass="10369">MPKLEMMLLVLLILPLSYFSAAGGQVVQGDLRSDVLARYLQRGDRDARECQVNTPGSRWGKCCLNRMCGPMCCPESHCYCVYHRRRGHGCSC</sequence>
<evidence type="ECO:0000250" key="1"/>
<evidence type="ECO:0000250" key="2">
    <source>
        <dbReference type="UniProtKB" id="A0A0A0VBX4"/>
    </source>
</evidence>
<evidence type="ECO:0000250" key="3">
    <source>
        <dbReference type="UniProtKB" id="C3VVN5"/>
    </source>
</evidence>
<evidence type="ECO:0000250" key="4">
    <source>
        <dbReference type="UniProtKB" id="P0C1W6"/>
    </source>
</evidence>
<evidence type="ECO:0000255" key="5"/>
<evidence type="ECO:0000305" key="6"/>
<feature type="signal peptide" evidence="5">
    <location>
        <begin position="1"/>
        <end position="24"/>
    </location>
</feature>
<feature type="propeptide" id="PRO_0000391826" evidence="1">
    <location>
        <begin position="25"/>
        <end position="45"/>
    </location>
</feature>
<feature type="chain" id="PRO_0000391827" description="Alpha-conotoxin-like Rt20.1">
    <location>
        <begin position="46"/>
        <end position="92"/>
    </location>
</feature>
<feature type="modified residue" description="4-carboxyglutamate" evidence="1">
    <location>
        <position position="49"/>
    </location>
</feature>
<feature type="modified residue" description="4-hydroxyproline" evidence="1">
    <location>
        <position position="55"/>
    </location>
</feature>
<feature type="disulfide bond" description="Interchain (with C-63)" evidence="2">
    <location>
        <position position="50"/>
    </location>
</feature>
<feature type="disulfide bond" description="Interchain (with C-51)" evidence="2">
    <location>
        <position position="62"/>
    </location>
</feature>
<feature type="disulfide bond" evidence="2">
    <location>
        <begin position="63"/>
        <end position="72"/>
    </location>
</feature>
<feature type="disulfide bond" evidence="2">
    <location>
        <begin position="68"/>
        <end position="80"/>
    </location>
</feature>
<feature type="disulfide bond" evidence="2">
    <location>
        <begin position="73"/>
        <end position="90"/>
    </location>
</feature>
<feature type="disulfide bond" evidence="2">
    <location>
        <begin position="78"/>
        <end position="92"/>
    </location>
</feature>
<protein>
    <recommendedName>
        <fullName>Alpha-conotoxin-like Rt20.1</fullName>
    </recommendedName>
</protein>
<comment type="function">
    <text evidence="4">Alpha-conotoxins act on postsynaptic membranes, they bind to the nicotinic acetylcholine receptors (nAChR) and thus inhibit them. Through its two C-terminal domains, this homodimeric protein would bind to two nAChR allosteric sites, located outside the nAChR C-loop of the principal binding face and at the adjacent binding interface in a clockwise direction. This toxin specifically blocks mammalian neuronal nAChR of the alpha-7/CHRNA7, alpha-3-beta-2/CHRNA3-CHRNB2 and alpha-4-beta-2/CHRNA4-CHRNB2 subtypes.</text>
</comment>
<comment type="subunit">
    <text evidence="3">Hetero-, homo- or pseudo-homodimer (identical sequence, different post-translational modifications).</text>
</comment>
<comment type="subcellular location">
    <subcellularLocation>
        <location>Secreted</location>
    </subcellularLocation>
</comment>
<comment type="tissue specificity">
    <text>Expressed by the venom duct.</text>
</comment>
<comment type="domain">
    <text>The cysteine framework is XX (C-CC-C-CC-C-C-C-C).</text>
</comment>
<comment type="domain">
    <text evidence="4">Displays a mini-granulin fold, a structure composed of two short, stacked beta-hairpins connected by two parallel disulfide bonds. This newly described fold is derived from the same cysteine connectivity as knottins (ICK fold). The name 'mini-granulin fold' comes from the structural homology with the N-terminal region of the human granulin.</text>
</comment>
<comment type="similarity">
    <text evidence="6">Belongs to the conotoxin D superfamily.</text>
</comment>
<accession>P0CE34</accession>